<evidence type="ECO:0000250" key="1"/>
<evidence type="ECO:0000250" key="2">
    <source>
        <dbReference type="UniProtKB" id="Q9LES3"/>
    </source>
</evidence>
<evidence type="ECO:0000255" key="3"/>
<evidence type="ECO:0000255" key="4">
    <source>
        <dbReference type="PROSITE-ProRule" id="PRU00768"/>
    </source>
</evidence>
<evidence type="ECO:0000255" key="5">
    <source>
        <dbReference type="PROSITE-ProRule" id="PRU00978"/>
    </source>
</evidence>
<evidence type="ECO:0000256" key="6">
    <source>
        <dbReference type="SAM" id="MobiDB-lite"/>
    </source>
</evidence>
<evidence type="ECO:0000269" key="7">
    <source>
    </source>
</evidence>
<evidence type="ECO:0000269" key="8">
    <source>
    </source>
</evidence>
<evidence type="ECO:0000269" key="9">
    <source>
    </source>
</evidence>
<evidence type="ECO:0000269" key="10">
    <source>
    </source>
</evidence>
<evidence type="ECO:0000269" key="11">
    <source>
    </source>
</evidence>
<evidence type="ECO:0000269" key="12">
    <source>
    </source>
</evidence>
<evidence type="ECO:0000269" key="13">
    <source>
    </source>
</evidence>
<evidence type="ECO:0000269" key="14">
    <source>
    </source>
</evidence>
<evidence type="ECO:0000269" key="15">
    <source>
    </source>
</evidence>
<evidence type="ECO:0000269" key="16">
    <source>
    </source>
</evidence>
<evidence type="ECO:0000269" key="17">
    <source>
    </source>
</evidence>
<evidence type="ECO:0000269" key="18">
    <source>
    </source>
</evidence>
<evidence type="ECO:0000303" key="19">
    <source>
    </source>
</evidence>
<evidence type="ECO:0000303" key="20">
    <source>
    </source>
</evidence>
<evidence type="ECO:0000303" key="21">
    <source>
    </source>
</evidence>
<evidence type="ECO:0000303" key="22">
    <source>
    </source>
</evidence>
<evidence type="ECO:0000305" key="23"/>
<evidence type="ECO:0000312" key="24">
    <source>
        <dbReference type="Araport" id="AT3G19290"/>
    </source>
</evidence>
<evidence type="ECO:0000312" key="25">
    <source>
        <dbReference type="EMBL" id="BAB02453.1"/>
    </source>
</evidence>
<gene>
    <name evidence="19 21" type="primary">ABF4</name>
    <name evidence="20" type="synonym">AREB2</name>
    <name evidence="22" type="synonym">BZIP38</name>
    <name evidence="24" type="ordered locus">At3g19290</name>
    <name evidence="25" type="ORF">MVI11.7</name>
</gene>
<protein>
    <recommendedName>
        <fullName>ABSCISIC ACID-INSENSITIVE 5-like protein 7</fullName>
    </recommendedName>
    <alternativeName>
        <fullName evidence="20">ABA-responsive element-binding protein 2</fullName>
    </alternativeName>
    <alternativeName>
        <fullName evidence="19 21">Abscisic acid responsive elements-binding factor 4</fullName>
        <shortName evidence="19 21">ABRE-binding factor 4</shortName>
    </alternativeName>
    <alternativeName>
        <fullName evidence="22">bZIP transcription factor 38</fullName>
        <shortName evidence="22">AtbZIP38</shortName>
    </alternativeName>
</protein>
<comment type="function">
    <text evidence="8 9 10 14 18">Functions as a transcriptional activator in the ABA-inducible expression of LTI65/RD29B (AC Q04980). Binds specifically to the ABA-responsive element (ABRE) of the LTI65/RD29B (AC Q04980) gene promoter (PubMed:11005831, PubMed:11884679, PubMed:15361142, PubMed:16463099). Binds to the promoter of FREE1 and activates its transcription (PubMed:32540007).</text>
</comment>
<comment type="subunit">
    <text evidence="1 12 16 17">DNA-binding heterodimer (By similarity). Interacts with CPK32 and the AFP proteins AFP1, AFP2 and AFP3. Interacts with FREE1 (via C-terminus) (PubMed:30962512).</text>
</comment>
<comment type="interaction">
    <interactant intactId="EBI-1237867">
        <id>Q9M7Q2</id>
    </interactant>
    <interactant intactId="EBI-1538032">
        <id>Q6NLQ6</id>
        <label>CPK32</label>
    </interactant>
    <organismsDiffer>false</organismsDiffer>
    <experiments>4</experiments>
</comment>
<comment type="subcellular location">
    <subcellularLocation>
        <location evidence="4 5">Nucleus</location>
    </subcellularLocation>
</comment>
<comment type="alternative products">
    <event type="alternative splicing"/>
    <isoform>
        <id>Q9M7Q2-1</id>
        <name>1</name>
        <sequence type="displayed"/>
    </isoform>
    <text>A number of isoforms are produced. According to EST sequences.</text>
</comment>
<comment type="tissue specificity">
    <text evidence="8 9">Expressed in roots, leaves, flowers and immatures siliques.</text>
</comment>
<comment type="induction">
    <text evidence="7 8 11 14">Up-regulated by drought, salt, abscisic acid (ABA) and cold.</text>
</comment>
<comment type="PTM">
    <text evidence="12 15">Phosphorylated by CPK4 and CPK11 in vitro.</text>
</comment>
<comment type="disruption phenotype">
    <text evidence="10">Defective in ABA and stress responses.</text>
</comment>
<comment type="similarity">
    <text evidence="23">Belongs to the bZIP family. ABI5 subfamily.</text>
</comment>
<comment type="sequence caution" evidence="23">
    <conflict type="erroneous gene model prediction">
        <sequence resource="EMBL-CDS" id="BAB02453"/>
    </conflict>
</comment>
<dbReference type="EMBL" id="AF093547">
    <property type="protein sequence ID" value="AAF27182.1"/>
    <property type="molecule type" value="mRNA"/>
</dbReference>
<dbReference type="EMBL" id="AB017161">
    <property type="protein sequence ID" value="BAB12405.1"/>
    <property type="molecule type" value="mRNA"/>
</dbReference>
<dbReference type="EMBL" id="AB025624">
    <property type="protein sequence ID" value="BAB02453.1"/>
    <property type="status" value="ALT_SEQ"/>
    <property type="molecule type" value="Genomic_DNA"/>
</dbReference>
<dbReference type="EMBL" id="CP002686">
    <property type="protein sequence ID" value="AEE76218.1"/>
    <property type="molecule type" value="Genomic_DNA"/>
</dbReference>
<dbReference type="EMBL" id="CP002686">
    <property type="protein sequence ID" value="ANM64097.1"/>
    <property type="molecule type" value="Genomic_DNA"/>
</dbReference>
<dbReference type="EMBL" id="AY050897">
    <property type="protein sequence ID" value="AAK92834.1"/>
    <property type="molecule type" value="mRNA"/>
</dbReference>
<dbReference type="EMBL" id="AY091298">
    <property type="protein sequence ID" value="AAM14237.1"/>
    <property type="molecule type" value="mRNA"/>
</dbReference>
<dbReference type="RefSeq" id="NP_001326147.1">
    <molecule id="Q9M7Q2-1"/>
    <property type="nucleotide sequence ID" value="NM_001338391.1"/>
</dbReference>
<dbReference type="RefSeq" id="NP_566629.1">
    <molecule id="Q9M7Q2-1"/>
    <property type="nucleotide sequence ID" value="NM_112816.3"/>
</dbReference>
<dbReference type="SMR" id="Q9M7Q2"/>
<dbReference type="BioGRID" id="6796">
    <property type="interactions" value="31"/>
</dbReference>
<dbReference type="FunCoup" id="Q9M7Q2">
    <property type="interactions" value="699"/>
</dbReference>
<dbReference type="IntAct" id="Q9M7Q2">
    <property type="interactions" value="21"/>
</dbReference>
<dbReference type="STRING" id="3702.Q9M7Q2"/>
<dbReference type="iPTMnet" id="Q9M7Q2"/>
<dbReference type="PaxDb" id="3702-AT3G19290.3"/>
<dbReference type="ProteomicsDB" id="244932">
    <molecule id="Q9M7Q2-1"/>
</dbReference>
<dbReference type="EnsemblPlants" id="AT3G19290.1">
    <molecule id="Q9M7Q2-1"/>
    <property type="protein sequence ID" value="AT3G19290.1"/>
    <property type="gene ID" value="AT3G19290"/>
</dbReference>
<dbReference type="EnsemblPlants" id="AT3G19290.5">
    <molecule id="Q9M7Q2-1"/>
    <property type="protein sequence ID" value="AT3G19290.5"/>
    <property type="gene ID" value="AT3G19290"/>
</dbReference>
<dbReference type="GeneID" id="821463"/>
<dbReference type="Gramene" id="AT3G19290.1">
    <molecule id="Q9M7Q2-1"/>
    <property type="protein sequence ID" value="AT3G19290.1"/>
    <property type="gene ID" value="AT3G19290"/>
</dbReference>
<dbReference type="Gramene" id="AT3G19290.5">
    <molecule id="Q9M7Q2-1"/>
    <property type="protein sequence ID" value="AT3G19290.5"/>
    <property type="gene ID" value="AT3G19290"/>
</dbReference>
<dbReference type="KEGG" id="ath:AT3G19290"/>
<dbReference type="Araport" id="AT3G19290"/>
<dbReference type="TAIR" id="AT3G19290">
    <property type="gene designation" value="ABF4"/>
</dbReference>
<dbReference type="eggNOG" id="ENOG502QPP6">
    <property type="taxonomic scope" value="Eukaryota"/>
</dbReference>
<dbReference type="HOGENOM" id="CLU_043238_1_0_1"/>
<dbReference type="InParanoid" id="Q9M7Q2"/>
<dbReference type="PhylomeDB" id="Q9M7Q2"/>
<dbReference type="PRO" id="PR:Q9M7Q2"/>
<dbReference type="Proteomes" id="UP000006548">
    <property type="component" value="Chromosome 3"/>
</dbReference>
<dbReference type="ExpressionAtlas" id="Q9M7Q2">
    <property type="expression patterns" value="baseline and differential"/>
</dbReference>
<dbReference type="GO" id="GO:0005634">
    <property type="term" value="C:nucleus"/>
    <property type="evidence" value="ECO:0007669"/>
    <property type="project" value="UniProtKB-SubCell"/>
</dbReference>
<dbReference type="GO" id="GO:0003677">
    <property type="term" value="F:DNA binding"/>
    <property type="evidence" value="ECO:0007669"/>
    <property type="project" value="UniProtKB-KW"/>
</dbReference>
<dbReference type="GO" id="GO:0003700">
    <property type="term" value="F:DNA-binding transcription factor activity"/>
    <property type="evidence" value="ECO:0007669"/>
    <property type="project" value="InterPro"/>
</dbReference>
<dbReference type="GO" id="GO:0009738">
    <property type="term" value="P:abscisic acid-activated signaling pathway"/>
    <property type="evidence" value="ECO:0007669"/>
    <property type="project" value="UniProtKB-KW"/>
</dbReference>
<dbReference type="GO" id="GO:0045893">
    <property type="term" value="P:positive regulation of DNA-templated transcription"/>
    <property type="evidence" value="ECO:0007669"/>
    <property type="project" value="InterPro"/>
</dbReference>
<dbReference type="CDD" id="cd14707">
    <property type="entry name" value="bZIP_plant_BZIP46"/>
    <property type="match status" value="1"/>
</dbReference>
<dbReference type="FunFam" id="1.20.5.170:FF:000048">
    <property type="entry name" value="ABSCISIC ACID-INSENSITIVE 5-like protein 5"/>
    <property type="match status" value="1"/>
</dbReference>
<dbReference type="Gene3D" id="1.20.5.170">
    <property type="match status" value="1"/>
</dbReference>
<dbReference type="InterPro" id="IPR004827">
    <property type="entry name" value="bZIP"/>
</dbReference>
<dbReference type="InterPro" id="IPR043452">
    <property type="entry name" value="BZIP46-like"/>
</dbReference>
<dbReference type="InterPro" id="IPR046347">
    <property type="entry name" value="bZIP_sf"/>
</dbReference>
<dbReference type="PANTHER" id="PTHR22952:SF463">
    <property type="entry name" value="ABSCISIC ACID-INSENSITIVE 5-LIKE PROTEIN 7"/>
    <property type="match status" value="1"/>
</dbReference>
<dbReference type="PANTHER" id="PTHR22952">
    <property type="entry name" value="CAMP-RESPONSE ELEMENT BINDING PROTEIN-RELATED"/>
    <property type="match status" value="1"/>
</dbReference>
<dbReference type="Pfam" id="PF00170">
    <property type="entry name" value="bZIP_1"/>
    <property type="match status" value="1"/>
</dbReference>
<dbReference type="SMART" id="SM00338">
    <property type="entry name" value="BRLZ"/>
    <property type="match status" value="1"/>
</dbReference>
<dbReference type="SUPFAM" id="SSF57959">
    <property type="entry name" value="Leucine zipper domain"/>
    <property type="match status" value="1"/>
</dbReference>
<dbReference type="PROSITE" id="PS50217">
    <property type="entry name" value="BZIP"/>
    <property type="match status" value="1"/>
</dbReference>
<dbReference type="PROSITE" id="PS00036">
    <property type="entry name" value="BZIP_BASIC"/>
    <property type="match status" value="1"/>
</dbReference>
<organism>
    <name type="scientific">Arabidopsis thaliana</name>
    <name type="common">Mouse-ear cress</name>
    <dbReference type="NCBI Taxonomy" id="3702"/>
    <lineage>
        <taxon>Eukaryota</taxon>
        <taxon>Viridiplantae</taxon>
        <taxon>Streptophyta</taxon>
        <taxon>Embryophyta</taxon>
        <taxon>Tracheophyta</taxon>
        <taxon>Spermatophyta</taxon>
        <taxon>Magnoliopsida</taxon>
        <taxon>eudicotyledons</taxon>
        <taxon>Gunneridae</taxon>
        <taxon>Pentapetalae</taxon>
        <taxon>rosids</taxon>
        <taxon>malvids</taxon>
        <taxon>Brassicales</taxon>
        <taxon>Brassicaceae</taxon>
        <taxon>Camelineae</taxon>
        <taxon>Arabidopsis</taxon>
    </lineage>
</organism>
<reference key="1">
    <citation type="journal article" date="2000" name="J. Biol. Chem.">
        <title>ABFs, a family of ABA-responsive element binding factors.</title>
        <authorList>
            <person name="Choi H.-I."/>
            <person name="Hong J.-H."/>
            <person name="Ha J.-O."/>
            <person name="Kang J.-Y."/>
            <person name="Kim S.Y."/>
        </authorList>
    </citation>
    <scope>NUCLEOTIDE SEQUENCE [MRNA]</scope>
    <scope>DNA-BINDING</scope>
    <scope>INDUCTION</scope>
    <source>
        <strain>cv. Columbia</strain>
        <tissue>Seedling</tissue>
    </source>
</reference>
<reference key="2">
    <citation type="journal article" date="2000" name="Proc. Natl. Acad. Sci. U.S.A.">
        <title>Arabidopsis basic leucine zipper transcription factors involved in an abscisic acid-dependent signal transduction pathway under drought and high-salinity conditions.</title>
        <authorList>
            <person name="Uno Y."/>
            <person name="Furihata T."/>
            <person name="Abe H."/>
            <person name="Yoshida R."/>
            <person name="Shinozaki K."/>
            <person name="Yamaguchi-Shinozaki K."/>
        </authorList>
    </citation>
    <scope>NUCLEOTIDE SEQUENCE [MRNA]</scope>
    <scope>FUNCTION</scope>
    <scope>TISSUE SPECIFICITY</scope>
    <scope>INDUCTION</scope>
</reference>
<reference key="3">
    <citation type="journal article" date="2000" name="DNA Res.">
        <title>Structural analysis of Arabidopsis thaliana chromosome 3. I. Sequence features of the regions of 4,504,864 bp covered by sixty P1 and TAC clones.</title>
        <authorList>
            <person name="Sato S."/>
            <person name="Nakamura Y."/>
            <person name="Kaneko T."/>
            <person name="Katoh T."/>
            <person name="Asamizu E."/>
            <person name="Tabata S."/>
        </authorList>
    </citation>
    <scope>NUCLEOTIDE SEQUENCE [LARGE SCALE GENOMIC DNA]</scope>
    <source>
        <strain>cv. Columbia</strain>
    </source>
</reference>
<reference key="4">
    <citation type="journal article" date="2017" name="Plant J.">
        <title>Araport11: a complete reannotation of the Arabidopsis thaliana reference genome.</title>
        <authorList>
            <person name="Cheng C.Y."/>
            <person name="Krishnakumar V."/>
            <person name="Chan A.P."/>
            <person name="Thibaud-Nissen F."/>
            <person name="Schobel S."/>
            <person name="Town C.D."/>
        </authorList>
    </citation>
    <scope>GENOME REANNOTATION</scope>
    <source>
        <strain>cv. Columbia</strain>
    </source>
</reference>
<reference key="5">
    <citation type="journal article" date="2003" name="Science">
        <title>Empirical analysis of transcriptional activity in the Arabidopsis genome.</title>
        <authorList>
            <person name="Yamada K."/>
            <person name="Lim J."/>
            <person name="Dale J.M."/>
            <person name="Chen H."/>
            <person name="Shinn P."/>
            <person name="Palm C.J."/>
            <person name="Southwick A.M."/>
            <person name="Wu H.C."/>
            <person name="Kim C.J."/>
            <person name="Nguyen M."/>
            <person name="Pham P.K."/>
            <person name="Cheuk R.F."/>
            <person name="Karlin-Newmann G."/>
            <person name="Liu S.X."/>
            <person name="Lam B."/>
            <person name="Sakano H."/>
            <person name="Wu T."/>
            <person name="Yu G."/>
            <person name="Miranda M."/>
            <person name="Quach H.L."/>
            <person name="Tripp M."/>
            <person name="Chang C.H."/>
            <person name="Lee J.M."/>
            <person name="Toriumi M.J."/>
            <person name="Chan M.M."/>
            <person name="Tang C.C."/>
            <person name="Onodera C.S."/>
            <person name="Deng J.M."/>
            <person name="Akiyama K."/>
            <person name="Ansari Y."/>
            <person name="Arakawa T."/>
            <person name="Banh J."/>
            <person name="Banno F."/>
            <person name="Bowser L."/>
            <person name="Brooks S.Y."/>
            <person name="Carninci P."/>
            <person name="Chao Q."/>
            <person name="Choy N."/>
            <person name="Enju A."/>
            <person name="Goldsmith A.D."/>
            <person name="Gurjal M."/>
            <person name="Hansen N.F."/>
            <person name="Hayashizaki Y."/>
            <person name="Johnson-Hopson C."/>
            <person name="Hsuan V.W."/>
            <person name="Iida K."/>
            <person name="Karnes M."/>
            <person name="Khan S."/>
            <person name="Koesema E."/>
            <person name="Ishida J."/>
            <person name="Jiang P.X."/>
            <person name="Jones T."/>
            <person name="Kawai J."/>
            <person name="Kamiya A."/>
            <person name="Meyers C."/>
            <person name="Nakajima M."/>
            <person name="Narusaka M."/>
            <person name="Seki M."/>
            <person name="Sakurai T."/>
            <person name="Satou M."/>
            <person name="Tamse R."/>
            <person name="Vaysberg M."/>
            <person name="Wallender E.K."/>
            <person name="Wong C."/>
            <person name="Yamamura Y."/>
            <person name="Yuan S."/>
            <person name="Shinozaki K."/>
            <person name="Davis R.W."/>
            <person name="Theologis A."/>
            <person name="Ecker J.R."/>
        </authorList>
    </citation>
    <scope>NUCLEOTIDE SEQUENCE [LARGE SCALE MRNA]</scope>
    <source>
        <strain>cv. Columbia</strain>
    </source>
</reference>
<reference key="6">
    <citation type="journal article" date="2002" name="Plant Cell">
        <title>Arabidopsis basic leucine zipper proteins that mediate stress-responsive abscisic acid signaling.</title>
        <authorList>
            <person name="Kang J.-Y."/>
            <person name="Choi H.-I."/>
            <person name="Im M.-Y."/>
            <person name="Kim S.Y."/>
        </authorList>
    </citation>
    <scope>FUNCTION</scope>
    <scope>TISSUE SPECIFICITY</scope>
</reference>
<reference key="7">
    <citation type="journal article" date="2002" name="Trends Plant Sci.">
        <title>bZIP transcription factors in Arabidopsis.</title>
        <authorList>
            <person name="Jakoby M."/>
            <person name="Weisshaar B."/>
            <person name="Droege-Laser W."/>
            <person name="Vicente-Carbajosa J."/>
            <person name="Tiedemann J."/>
            <person name="Kroj T."/>
            <person name="Parcy F."/>
        </authorList>
    </citation>
    <scope>GENE FAMILY</scope>
    <scope>NOMENCLATURE</scope>
</reference>
<reference key="8">
    <citation type="journal article" date="2004" name="Plant J.">
        <title>ABF2, an ABRE-binding bZIP factor, is an essential component of glucose signaling and its overexpression affects multiple stress tolerance.</title>
        <authorList>
            <person name="Kim S."/>
            <person name="Kang J.-Y."/>
            <person name="Cho D.-I."/>
            <person name="Park J.H."/>
            <person name="Kim S.Y."/>
        </authorList>
    </citation>
    <scope>FUNCTION</scope>
    <scope>DISRUPTION PHENOTYPE</scope>
</reference>
<reference key="9">
    <citation type="journal article" date="2005" name="Plant Cell">
        <title>AREB1 is a transcription activator of novel ABRE-dependent ABA signaling that enhances drought stress tolerance in Arabidopsis.</title>
        <authorList>
            <person name="Fujita Y."/>
            <person name="Fujita M."/>
            <person name="Satoh R."/>
            <person name="Maruyama K."/>
            <person name="Parvez M.M."/>
            <person name="Seki M."/>
            <person name="Hiratsu K."/>
            <person name="Ohme-Takagi M."/>
            <person name="Shinozaki K."/>
            <person name="Yamaguchi-Shinozaki K."/>
        </authorList>
    </citation>
    <scope>INDUCTION</scope>
</reference>
<reference key="10">
    <citation type="journal article" date="2005" name="Plant Physiol.">
        <title>Arabidopsis calcium-dependent protein kinase AtCPK32 interacts with ABF4, a transcriptional regulator of abscisic acid-responsive gene expression, and modulates its activity.</title>
        <authorList>
            <person name="Choi H.-I."/>
            <person name="Park H.-J."/>
            <person name="Park J.H."/>
            <person name="Kim S."/>
            <person name="Im M.-Y."/>
            <person name="Seo H.-H."/>
            <person name="Kim Y.-W."/>
            <person name="Hwang I."/>
            <person name="Kim S.Y."/>
        </authorList>
    </citation>
    <scope>INTERACTION WITH CPK32</scope>
    <scope>PHOSPHORYLATION AT SER-110 BY CPK32</scope>
</reference>
<reference key="11">
    <citation type="journal article" date="2006" name="Plant Mol. Biol.">
        <title>Transcriptional regulation of ABI3- and ABA-responsive genes including RD29B and RD29A in seeds, germinating embryos, and seedlings of Arabidopsis.</title>
        <authorList>
            <person name="Nakashima K."/>
            <person name="Fujita Y."/>
            <person name="Katsura K."/>
            <person name="Maruyama K."/>
            <person name="Narusaka Y."/>
            <person name="Seki M."/>
            <person name="Shinozaki K."/>
            <person name="Yamaguchi-Shinozaki K."/>
        </authorList>
    </citation>
    <scope>FUNCTION</scope>
    <scope>INDUCTION</scope>
</reference>
<reference key="12">
    <citation type="journal article" date="2006" name="Proc. Natl. Acad. Sci. U.S.A.">
        <title>Abscisic acid-dependent multisite phosphorylation regulates the activity of a transcription activator AREB1.</title>
        <authorList>
            <person name="Furihata T."/>
            <person name="Maruyama K."/>
            <person name="Fujita Y."/>
            <person name="Umezawa T."/>
            <person name="Yoshida R."/>
            <person name="Shinozaki K."/>
            <person name="Yamaguchi-Shinozaki K."/>
        </authorList>
    </citation>
    <scope>MUTAGENESIS OF SER-39</scope>
</reference>
<reference key="13">
    <citation type="journal article" date="2007" name="Plant Cell">
        <title>Two calcium-dependent protein kinases, CPK4 and CPK11, regulate abscisic acid signal transduction in Arabidopsis.</title>
        <authorList>
            <person name="Zhu S.-Y."/>
            <person name="Yu X.-C."/>
            <person name="Wang X.-J."/>
            <person name="Zhao R."/>
            <person name="Li Y."/>
            <person name="Fan R.-C."/>
            <person name="Shang Y."/>
            <person name="Du S.-Y."/>
            <person name="Wang X.-F."/>
            <person name="Wu F.-Q."/>
            <person name="Xu Y.-H."/>
            <person name="Zhang X.-Y."/>
            <person name="Zhang D.-P."/>
        </authorList>
    </citation>
    <scope>PHOSPHORYLATION BY CPK4 AND CPK11</scope>
</reference>
<reference key="14">
    <citation type="journal article" date="2008" name="Plant Mol. Biol.">
        <title>A small plant-specific protein family of ABI five binding proteins (AFPs) regulates stress response in germinating Arabidopsis seeds and seedlings.</title>
        <authorList>
            <person name="Garcia M.E."/>
            <person name="Lynch T.J."/>
            <person name="Peeters J."/>
            <person name="Snowden C."/>
            <person name="Finkelstein R.R."/>
        </authorList>
    </citation>
    <scope>INTERACTION WITH AFP1; AFP2 AND AFP3</scope>
</reference>
<reference key="15">
    <citation type="journal article" date="2019" name="Nat. Plants">
        <title>The plant ESCRT component FREE1 shuttles to the nucleus to attenuate abscisic acid signalling.</title>
        <authorList>
            <person name="Li H."/>
            <person name="Li Y."/>
            <person name="Zhao Q."/>
            <person name="Li T."/>
            <person name="Wei J."/>
            <person name="Li B."/>
            <person name="Shen W."/>
            <person name="Yang C."/>
            <person name="Zeng Y."/>
            <person name="Rodriguez P.L."/>
            <person name="Zhao Y."/>
            <person name="Jiang L."/>
            <person name="Wang X."/>
            <person name="Gao C."/>
        </authorList>
    </citation>
    <scope>INTERACTION WITH FREE1</scope>
</reference>
<reference key="16">
    <citation type="journal article" date="2020" name="Plant Sci.">
        <title>The effect of ABRE BINDING FACTOR 4-mediated FYVE1 on salt stress tolerance in Arabidopsis.</title>
        <authorList>
            <person name="Pan W."/>
            <person name="Zheng P."/>
            <person name="Zhang C."/>
            <person name="Wang W."/>
            <person name="Li Y."/>
            <person name="Fan T."/>
            <person name="Liu Y."/>
            <person name="Cao S."/>
        </authorList>
    </citation>
    <scope>FUNCTION</scope>
</reference>
<sequence>MGTHINFNNLGGGGHPGGEGSSNQMKPTGSVMPLARQSSVYSLTFDELQNTLGGPGKDFGSMNMDELLKSIWTAEEAQAMAMTSAPAATAVAQPGAGIPPPGGNLQRQGSLTLPRTISQKTVDEVWKCLITKDGNMEGSSGGGGESNVPPGRQQTLGEMTLEEFLFRAGVVREDNCVQQMGQVNGNNNNGFYGNSTAAGGLGFGFGQPNQNSITFNGTNDSMILNQPPGLGLKMGGTMQQQQQQQQLLQQQQQQMQQLNQPHPQQRLPQTIFPKQANVAFSAPVNITNKGFAGAANNSINNNNGLASYGGTGVTVAATSPGTSSAENNSLSPVPYVLNRGRRSNTGLEKVIERRQRRMIKNRESAARSRARKQAYTLELEAEIEKLKKTNQELQKKQAEMVEMQKNELKETSKRPWGSKRQCLRRTLTGPW</sequence>
<feature type="chain" id="PRO_0000369612" description="ABSCISIC ACID-INSENSITIVE 5-like protein 7">
    <location>
        <begin position="1"/>
        <end position="431"/>
    </location>
</feature>
<feature type="domain" description="bZIP" evidence="5">
    <location>
        <begin position="351"/>
        <end position="414"/>
    </location>
</feature>
<feature type="region of interest" description="Disordered" evidence="6">
    <location>
        <begin position="1"/>
        <end position="29"/>
    </location>
</feature>
<feature type="region of interest" description="Disordered" evidence="6">
    <location>
        <begin position="133"/>
        <end position="153"/>
    </location>
</feature>
<feature type="region of interest" description="Disordered" evidence="6">
    <location>
        <begin position="319"/>
        <end position="338"/>
    </location>
</feature>
<feature type="region of interest" description="Basic motif" evidence="5">
    <location>
        <begin position="353"/>
        <end position="372"/>
    </location>
</feature>
<feature type="region of interest" description="Leucine-zipper" evidence="5">
    <location>
        <begin position="379"/>
        <end position="393"/>
    </location>
</feature>
<feature type="coiled-coil region" evidence="3">
    <location>
        <begin position="372"/>
        <end position="411"/>
    </location>
</feature>
<feature type="short sequence motif" description="Nuclear localization signal" evidence="4">
    <location>
        <begin position="340"/>
        <end position="347"/>
    </location>
</feature>
<feature type="compositionally biased region" description="Gly residues" evidence="6">
    <location>
        <begin position="10"/>
        <end position="20"/>
    </location>
</feature>
<feature type="compositionally biased region" description="Polar residues" evidence="6">
    <location>
        <begin position="319"/>
        <end position="331"/>
    </location>
</feature>
<feature type="modified residue" description="Phosphoserine" evidence="3">
    <location>
        <position position="39"/>
    </location>
</feature>
<feature type="modified residue" description="Phosphoserine" evidence="2">
    <location>
        <position position="61"/>
    </location>
</feature>
<feature type="modified residue" description="Phosphoserine; by CPK32" evidence="12">
    <location>
        <position position="110"/>
    </location>
</feature>
<feature type="modified residue" description="Phosphothreonine" evidence="3">
    <location>
        <position position="155"/>
    </location>
</feature>
<feature type="mutagenesis site" description="Abolishes ABA-dependent phosphorylation." evidence="13">
    <original>S</original>
    <variation>A</variation>
    <location>
        <position position="39"/>
    </location>
</feature>
<proteinExistence type="evidence at protein level"/>
<keyword id="KW-0938">Abscisic acid signaling pathway</keyword>
<keyword id="KW-0010">Activator</keyword>
<keyword id="KW-0025">Alternative splicing</keyword>
<keyword id="KW-0175">Coiled coil</keyword>
<keyword id="KW-0238">DNA-binding</keyword>
<keyword id="KW-0539">Nucleus</keyword>
<keyword id="KW-0597">Phosphoprotein</keyword>
<keyword id="KW-1185">Reference proteome</keyword>
<keyword id="KW-0804">Transcription</keyword>
<keyword id="KW-0805">Transcription regulation</keyword>
<accession>Q9M7Q2</accession>
<accession>Q9LT88</accession>
<name>AI5L7_ARATH</name>